<name>LUXS_STRPY</name>
<reference key="1">
    <citation type="journal article" date="2001" name="Mol. Microbiol.">
        <title>Mutation of luxS affects growth and virulence factor expression in Streptococcus pyogenes.</title>
        <authorList>
            <person name="Lyon W.R."/>
            <person name="Madden J.C."/>
            <person name="Levin J.C."/>
            <person name="Stein J.L."/>
            <person name="Caparon M.G."/>
        </authorList>
    </citation>
    <scope>NUCLEOTIDE SEQUENCE [GENOMIC DNA]</scope>
</reference>
<protein>
    <recommendedName>
        <fullName>S-ribosylhomocysteine lyase</fullName>
        <ecNumber>4.4.1.21</ecNumber>
    </recommendedName>
    <alternativeName>
        <fullName>AI-2 synthesis protein</fullName>
    </alternativeName>
    <alternativeName>
        <fullName>Autoinducer-2 production protein LuxS</fullName>
    </alternativeName>
</protein>
<accession>P0C0C7</accession>
<accession>P0A3P7</accession>
<accession>Q99YL7</accession>
<accession>Q9EVB4</accession>
<keyword id="KW-0071">Autoinducer synthesis</keyword>
<keyword id="KW-0408">Iron</keyword>
<keyword id="KW-0456">Lyase</keyword>
<keyword id="KW-0479">Metal-binding</keyword>
<keyword id="KW-0673">Quorum sensing</keyword>
<evidence type="ECO:0000250" key="1"/>
<evidence type="ECO:0000305" key="2"/>
<organism>
    <name type="scientific">Streptococcus pyogenes</name>
    <dbReference type="NCBI Taxonomy" id="1314"/>
    <lineage>
        <taxon>Bacteria</taxon>
        <taxon>Bacillati</taxon>
        <taxon>Bacillota</taxon>
        <taxon>Bacilli</taxon>
        <taxon>Lactobacillales</taxon>
        <taxon>Streptococcaceae</taxon>
        <taxon>Streptococcus</taxon>
    </lineage>
</organism>
<comment type="function">
    <text evidence="1">Involved in the synthesis of autoinducer 2 (AI-2) which is secreted by bacteria and is used to communicate both the cell density and the metabolic potential of the environment. The regulation of gene expression in response to changes in cell density is called quorum sensing. Catalyzes the transformation of S-ribosylhomocysteine (RHC) to homocysteine (HC) and 4,5-dihydroxy-2,3-pentadione (DPD) (By similarity).</text>
</comment>
<comment type="catalytic activity">
    <reaction>
        <text>S-(5-deoxy-D-ribos-5-yl)-L-homocysteine = (S)-4,5-dihydroxypentane-2,3-dione + L-homocysteine</text>
        <dbReference type="Rhea" id="RHEA:17753"/>
        <dbReference type="ChEBI" id="CHEBI:29484"/>
        <dbReference type="ChEBI" id="CHEBI:58195"/>
        <dbReference type="ChEBI" id="CHEBI:58199"/>
        <dbReference type="EC" id="4.4.1.21"/>
    </reaction>
</comment>
<comment type="cofactor">
    <cofactor evidence="1">
        <name>Fe cation</name>
        <dbReference type="ChEBI" id="CHEBI:24875"/>
    </cofactor>
    <text evidence="1">Binds 1 Fe cation per subunit.</text>
</comment>
<comment type="subunit">
    <text evidence="1">Homodimer.</text>
</comment>
<comment type="similarity">
    <text evidence="2">Belongs to the LuxS family.</text>
</comment>
<comment type="sequence caution" evidence="2">
    <conflict type="erroneous initiation">
        <sequence resource="EMBL-CDS" id="AAG28749"/>
    </conflict>
</comment>
<feature type="chain" id="PRO_0000172267" description="S-ribosylhomocysteine lyase">
    <location>
        <begin position="1"/>
        <end position="160"/>
    </location>
</feature>
<feature type="binding site" evidence="1">
    <location>
        <position position="57"/>
    </location>
    <ligand>
        <name>Fe cation</name>
        <dbReference type="ChEBI" id="CHEBI:24875"/>
    </ligand>
</feature>
<feature type="binding site" evidence="1">
    <location>
        <position position="61"/>
    </location>
    <ligand>
        <name>Fe cation</name>
        <dbReference type="ChEBI" id="CHEBI:24875"/>
    </ligand>
</feature>
<feature type="binding site" evidence="1">
    <location>
        <position position="127"/>
    </location>
    <ligand>
        <name>Fe cation</name>
        <dbReference type="ChEBI" id="CHEBI:24875"/>
    </ligand>
</feature>
<dbReference type="EC" id="4.4.1.21"/>
<dbReference type="EMBL" id="AF295118">
    <property type="protein sequence ID" value="AAG28749.1"/>
    <property type="status" value="ALT_INIT"/>
    <property type="molecule type" value="Genomic_DNA"/>
</dbReference>
<dbReference type="RefSeq" id="WP_002988938.1">
    <property type="nucleotide sequence ID" value="NZ_WXZK01000018.1"/>
</dbReference>
<dbReference type="SMR" id="P0C0C7"/>
<dbReference type="STRING" id="1314.SD89_02525"/>
<dbReference type="eggNOG" id="COG1854">
    <property type="taxonomic scope" value="Bacteria"/>
</dbReference>
<dbReference type="OrthoDB" id="9788129at2"/>
<dbReference type="BRENDA" id="4.4.1.21">
    <property type="organism ID" value="5935"/>
</dbReference>
<dbReference type="GO" id="GO:0005506">
    <property type="term" value="F:iron ion binding"/>
    <property type="evidence" value="ECO:0007669"/>
    <property type="project" value="InterPro"/>
</dbReference>
<dbReference type="GO" id="GO:0043768">
    <property type="term" value="F:S-ribosylhomocysteine lyase activity"/>
    <property type="evidence" value="ECO:0007669"/>
    <property type="project" value="UniProtKB-UniRule"/>
</dbReference>
<dbReference type="GO" id="GO:0009372">
    <property type="term" value="P:quorum sensing"/>
    <property type="evidence" value="ECO:0007669"/>
    <property type="project" value="UniProtKB-UniRule"/>
</dbReference>
<dbReference type="Gene3D" id="3.30.1360.80">
    <property type="entry name" value="S-ribosylhomocysteinase (LuxS)"/>
    <property type="match status" value="1"/>
</dbReference>
<dbReference type="HAMAP" id="MF_00091">
    <property type="entry name" value="LuxS"/>
    <property type="match status" value="1"/>
</dbReference>
<dbReference type="InterPro" id="IPR037005">
    <property type="entry name" value="LuxS_sf"/>
</dbReference>
<dbReference type="InterPro" id="IPR011249">
    <property type="entry name" value="Metalloenz_LuxS/M16"/>
</dbReference>
<dbReference type="InterPro" id="IPR003815">
    <property type="entry name" value="S-ribosylhomocysteinase"/>
</dbReference>
<dbReference type="NCBIfam" id="NF002607">
    <property type="entry name" value="PRK02260.2-5"/>
    <property type="match status" value="1"/>
</dbReference>
<dbReference type="NCBIfam" id="NF002608">
    <property type="entry name" value="PRK02260.3-1"/>
    <property type="match status" value="1"/>
</dbReference>
<dbReference type="PANTHER" id="PTHR35799">
    <property type="entry name" value="S-RIBOSYLHOMOCYSTEINE LYASE"/>
    <property type="match status" value="1"/>
</dbReference>
<dbReference type="PANTHER" id="PTHR35799:SF1">
    <property type="entry name" value="S-RIBOSYLHOMOCYSTEINE LYASE"/>
    <property type="match status" value="1"/>
</dbReference>
<dbReference type="Pfam" id="PF02664">
    <property type="entry name" value="LuxS"/>
    <property type="match status" value="1"/>
</dbReference>
<dbReference type="PIRSF" id="PIRSF006160">
    <property type="entry name" value="AI2"/>
    <property type="match status" value="1"/>
</dbReference>
<dbReference type="PRINTS" id="PR01487">
    <property type="entry name" value="LUXSPROTEIN"/>
</dbReference>
<dbReference type="SUPFAM" id="SSF63411">
    <property type="entry name" value="LuxS/MPP-like metallohydrolase"/>
    <property type="match status" value="1"/>
</dbReference>
<sequence length="160" mass="17979">MTKEVIVESFELDHTIVKAPYVRLISEEFGPKGDRITNFDVRLVQPNQNSIETAGLHTIEHLLAKLIRQRIDGMIDCSPFGCRTGFHLIMWGKHSSTDIAKVIKSSLEEIATGITWEDVPGTTLESCGNYKDHSLFAAKEWAQLIIDQGISDDPFSRHVI</sequence>
<gene>
    <name type="primary">luxS</name>
</gene>
<proteinExistence type="inferred from homology"/>